<reference key="1">
    <citation type="journal article" date="2002" name="J. Immunol.">
        <title>NK cell receptors of the orangutan (Pongo pygmaeus): a pivotal species for tracking the coevolution of killer cell Ig-like receptors with MHC-C.</title>
        <authorList>
            <person name="Guethlein L.A."/>
            <person name="Flodin L.R."/>
            <person name="Adams E.J."/>
            <person name="Parham P."/>
        </authorList>
    </citation>
    <scope>NUCLEOTIDE SEQUENCE [MRNA]</scope>
</reference>
<keyword id="KW-1064">Adaptive immunity</keyword>
<keyword id="KW-1003">Cell membrane</keyword>
<keyword id="KW-1015">Disulfide bond</keyword>
<keyword id="KW-0325">Glycoprotein</keyword>
<keyword id="KW-0391">Immunity</keyword>
<keyword id="KW-0399">Innate immunity</keyword>
<keyword id="KW-0430">Lectin</keyword>
<keyword id="KW-0472">Membrane</keyword>
<keyword id="KW-0675">Receptor</keyword>
<keyword id="KW-0735">Signal-anchor</keyword>
<keyword id="KW-0812">Transmembrane</keyword>
<keyword id="KW-1133">Transmembrane helix</keyword>
<evidence type="ECO:0000250" key="1">
    <source>
        <dbReference type="UniProtKB" id="Q13241"/>
    </source>
</evidence>
<evidence type="ECO:0000255" key="2"/>
<evidence type="ECO:0000255" key="3">
    <source>
        <dbReference type="PROSITE-ProRule" id="PRU00040"/>
    </source>
</evidence>
<protein>
    <recommendedName>
        <fullName>Natural killer cells antigen CD94</fullName>
    </recommendedName>
    <alternativeName>
        <fullName>Killer cell lectin-like receptor subfamily D member 1</fullName>
    </alternativeName>
    <alternativeName>
        <fullName>NK cell receptor</fullName>
    </alternativeName>
    <alternativeName>
        <fullName>Popy-CD94</fullName>
    </alternativeName>
    <cdAntigenName>CD94</cdAntigenName>
</protein>
<feature type="chain" id="PRO_0000046590" description="Natural killer cells antigen CD94">
    <location>
        <begin position="1"/>
        <end position="179"/>
    </location>
</feature>
<feature type="topological domain" description="Cytoplasmic" evidence="2">
    <location>
        <begin position="1"/>
        <end position="10"/>
    </location>
</feature>
<feature type="transmembrane region" description="Helical; Signal-anchor for type II membrane protein" evidence="2">
    <location>
        <begin position="11"/>
        <end position="31"/>
    </location>
</feature>
<feature type="topological domain" description="Extracellular" evidence="2">
    <location>
        <begin position="32"/>
        <end position="179"/>
    </location>
</feature>
<feature type="domain" description="C-type lectin" evidence="3">
    <location>
        <begin position="68"/>
        <end position="175"/>
    </location>
</feature>
<feature type="glycosylation site" description="N-linked (GlcNAc...) asparagine" evidence="2">
    <location>
        <position position="83"/>
    </location>
</feature>
<feature type="glycosylation site" description="N-linked (GlcNAc...) asparagine" evidence="2">
    <location>
        <position position="132"/>
    </location>
</feature>
<feature type="disulfide bond" evidence="3">
    <location>
        <begin position="58"/>
        <end position="70"/>
    </location>
</feature>
<feature type="disulfide bond" description="Interchain (with C-116 in KLRC1/NGK2A)" evidence="3">
    <location>
        <position position="59"/>
    </location>
</feature>
<feature type="disulfide bond" evidence="3">
    <location>
        <begin position="61"/>
        <end position="72"/>
    </location>
</feature>
<feature type="disulfide bond" evidence="3">
    <location>
        <begin position="89"/>
        <end position="174"/>
    </location>
</feature>
<feature type="disulfide bond" evidence="3">
    <location>
        <begin position="152"/>
        <end position="166"/>
    </location>
</feature>
<feature type="sequence variant" id="VAR_019064" description="In allele CD94*02 and allele CD94*05.">
    <original>T</original>
    <variation>M</variation>
    <location>
        <position position="24"/>
    </location>
</feature>
<feature type="sequence variant" id="VAR_019065" description="In allele CD94*03 and allele CD94*05.">
    <original>A</original>
    <variation>S</variation>
    <location>
        <position position="135"/>
    </location>
</feature>
<comment type="function">
    <text evidence="1">Immune receptor involved in self-nonself discrimination. In complex with KLRC1 or KLRC2 on cytotoxic and regulatory lymphocyte subsets, recognizes non-classical major histocompatibility (MHC) class Ib molecule MHC-E loaded with self-peptides derived from the signal sequence of classical MHC class Ia and non-classical MHC class Ib molecules. Enables cytotoxic cells to monitor the expression of MHC class I molecules in healthy cells and to tolerate self. Primarily functions as a ligand binding subunit as it lacks the capacity to signal.</text>
</comment>
<comment type="function">
    <text evidence="1">KLRD1-KLRC1 acts as an immune inhibitory receptor. Key inhibitory receptor on natural killer (NK) cells that regulates their activation and effector functions. Dominantly counteracts T cell receptor signaling on a subset of memory/effector CD8-positive T cells as part of an antigen-driven response to avoid autoimmunity. On intraepithelial CD8-positive gamma-delta regulatory T cells triggers TGFB1 secretion, which in turn limits the cytotoxic programming of intraepithelial CD8-positive alpha-beta T cells, distinguishing harmless from pathogenic antigens. In MHC-E-rich tumor microenvironment, acts as an immune inhibitory checkpoint and may contribute to progressive loss of effector functions of NK cells and tumor-specific T cells, a state known as cell exhaustion. Upon MHC-E-peptide binding, transmits intracellular signals through KLRC1 immunoreceptor tyrosine-based inhibition motifs (ITIMs) by recruiting INPP5D/SHIP-1 and INPPL1/SHIP-2 tyrosine phosphatases to ITIMs, and ultimately opposing signals transmitted by activating receptors through dephosphorylation of proximal signaling molecules.</text>
</comment>
<comment type="function">
    <text evidence="1">KLRD1-KLRC2 acts as an immune activating receptor. On cytotoxic lymphocyte subsets recognizes MHC-E loaded with signal sequence-derived peptides from non-classical MHC class Ib MHC-G molecules, likely playing a role in the generation and effector functions of adaptive NK cells and in maternal-fetal tolerance during pregnancy. Regulates the effector functions of terminally differentiated cytotoxic lymphocyte subsets, and in particular may play a role in adaptive NK cell response to viral infection. Upon MHC-E-peptide binding, transmits intracellular signals via the adapter protein TYROBP/DAP12, triggering the phosphorylation of proximal signaling molecules and cell activation.</text>
</comment>
<comment type="subunit">
    <text evidence="1">Can form disulfide-bonded heterodimer with NKG2 family members KLRC1 and KLRC2. KLRD1-KLRC1 heterodimer interacts with peptide-bound MHC-E-B2M heterotrimeric complex. KLRD1 plays a prominent role in directly interacting with MHC-E. KLRD1-KLRC1 interacts with much higher affinity with peptide-bound MHC-E-B2M than KLRD1-KLRC2. Interacts with the adapter protein TYROBP/DAP12; this interaction is required for cell surface expression and cell activation.</text>
</comment>
<comment type="subcellular location">
    <subcellularLocation>
        <location evidence="1">Cell membrane</location>
        <topology evidence="2">Single-pass type II membrane protein</topology>
    </subcellularLocation>
</comment>
<comment type="tissue specificity">
    <text>Natural killer cells.</text>
</comment>
<organism>
    <name type="scientific">Pongo pygmaeus</name>
    <name type="common">Bornean orangutan</name>
    <dbReference type="NCBI Taxonomy" id="9600"/>
    <lineage>
        <taxon>Eukaryota</taxon>
        <taxon>Metazoa</taxon>
        <taxon>Chordata</taxon>
        <taxon>Craniata</taxon>
        <taxon>Vertebrata</taxon>
        <taxon>Euteleostomi</taxon>
        <taxon>Mammalia</taxon>
        <taxon>Eutheria</taxon>
        <taxon>Euarchontoglires</taxon>
        <taxon>Primates</taxon>
        <taxon>Haplorrhini</taxon>
        <taxon>Catarrhini</taxon>
        <taxon>Hominidae</taxon>
        <taxon>Pongo</taxon>
    </lineage>
</organism>
<gene>
    <name type="primary">KLRD1</name>
    <name type="synonym">CD94</name>
</gene>
<proteinExistence type="evidence at transcript level"/>
<dbReference type="EMBL" id="AF470380">
    <property type="protein sequence ID" value="AAM78480.1"/>
    <property type="molecule type" value="mRNA"/>
</dbReference>
<dbReference type="EMBL" id="AF470381">
    <property type="protein sequence ID" value="AAM78481.1"/>
    <property type="molecule type" value="mRNA"/>
</dbReference>
<dbReference type="EMBL" id="AF470382">
    <property type="protein sequence ID" value="AAM78482.1"/>
    <property type="molecule type" value="mRNA"/>
</dbReference>
<dbReference type="EMBL" id="AF470383">
    <property type="protein sequence ID" value="AAM78483.1"/>
    <property type="molecule type" value="mRNA"/>
</dbReference>
<dbReference type="EMBL" id="AF470384">
    <property type="protein sequence ID" value="AAM78484.1"/>
    <property type="molecule type" value="mRNA"/>
</dbReference>
<dbReference type="EMBL" id="AF470385">
    <property type="protein sequence ID" value="AAM78485.1"/>
    <property type="molecule type" value="mRNA"/>
</dbReference>
<dbReference type="SMR" id="Q8MHY9"/>
<dbReference type="GlyCosmos" id="Q8MHY9">
    <property type="glycosylation" value="2 sites, No reported glycans"/>
</dbReference>
<dbReference type="GO" id="GO:0005886">
    <property type="term" value="C:plasma membrane"/>
    <property type="evidence" value="ECO:0000250"/>
    <property type="project" value="UniProtKB"/>
</dbReference>
<dbReference type="GO" id="GO:0030246">
    <property type="term" value="F:carbohydrate binding"/>
    <property type="evidence" value="ECO:0007669"/>
    <property type="project" value="UniProtKB-KW"/>
</dbReference>
<dbReference type="GO" id="GO:0002250">
    <property type="term" value="P:adaptive immune response"/>
    <property type="evidence" value="ECO:0007669"/>
    <property type="project" value="UniProtKB-KW"/>
</dbReference>
<dbReference type="GO" id="GO:0045087">
    <property type="term" value="P:innate immune response"/>
    <property type="evidence" value="ECO:0007669"/>
    <property type="project" value="UniProtKB-KW"/>
</dbReference>
<dbReference type="GO" id="GO:0045953">
    <property type="term" value="P:negative regulation of natural killer cell mediated cytotoxicity"/>
    <property type="evidence" value="ECO:0000250"/>
    <property type="project" value="UniProtKB"/>
</dbReference>
<dbReference type="GO" id="GO:0001915">
    <property type="term" value="P:negative regulation of T cell mediated cytotoxicity"/>
    <property type="evidence" value="ECO:0000250"/>
    <property type="project" value="UniProtKB"/>
</dbReference>
<dbReference type="GO" id="GO:0045954">
    <property type="term" value="P:positive regulation of natural killer cell mediated cytotoxicity"/>
    <property type="evidence" value="ECO:0007669"/>
    <property type="project" value="TreeGrafter"/>
</dbReference>
<dbReference type="GO" id="GO:0002223">
    <property type="term" value="P:stimulatory C-type lectin receptor signaling pathway"/>
    <property type="evidence" value="ECO:0000250"/>
    <property type="project" value="UniProtKB"/>
</dbReference>
<dbReference type="CDD" id="cd03593">
    <property type="entry name" value="CLECT_NK_receptors_like"/>
    <property type="match status" value="1"/>
</dbReference>
<dbReference type="FunFam" id="3.10.100.10:FF:000064">
    <property type="entry name" value="Natural killer cells antigen CD94"/>
    <property type="match status" value="1"/>
</dbReference>
<dbReference type="Gene3D" id="3.10.100.10">
    <property type="entry name" value="Mannose-Binding Protein A, subunit A"/>
    <property type="match status" value="1"/>
</dbReference>
<dbReference type="InterPro" id="IPR001304">
    <property type="entry name" value="C-type_lectin-like"/>
</dbReference>
<dbReference type="InterPro" id="IPR016186">
    <property type="entry name" value="C-type_lectin-like/link_sf"/>
</dbReference>
<dbReference type="InterPro" id="IPR016187">
    <property type="entry name" value="CTDL_fold"/>
</dbReference>
<dbReference type="InterPro" id="IPR050919">
    <property type="entry name" value="NKG2/CD94_NK_receptors"/>
</dbReference>
<dbReference type="InterPro" id="IPR033992">
    <property type="entry name" value="NKR-like_CTLD"/>
</dbReference>
<dbReference type="PANTHER" id="PTHR22800">
    <property type="entry name" value="C-TYPE LECTIN PROTEINS"/>
    <property type="match status" value="1"/>
</dbReference>
<dbReference type="PANTHER" id="PTHR22800:SF252">
    <property type="entry name" value="NATURAL KILLER CELLS ANTIGEN CD94"/>
    <property type="match status" value="1"/>
</dbReference>
<dbReference type="Pfam" id="PF00059">
    <property type="entry name" value="Lectin_C"/>
    <property type="match status" value="1"/>
</dbReference>
<dbReference type="SMART" id="SM00034">
    <property type="entry name" value="CLECT"/>
    <property type="match status" value="1"/>
</dbReference>
<dbReference type="SUPFAM" id="SSF56436">
    <property type="entry name" value="C-type lectin-like"/>
    <property type="match status" value="1"/>
</dbReference>
<dbReference type="PROSITE" id="PS50041">
    <property type="entry name" value="C_TYPE_LECTIN_2"/>
    <property type="match status" value="1"/>
</dbReference>
<accession>Q8MHY9</accession>
<accession>Q8MHY8</accession>
<accession>Q8MJI3</accession>
<accession>Q8MJI4</accession>
<name>KLRD1_PONPY</name>
<sequence length="179" mass="20520">MAVFKTTLWWLISGTLGIICLSLTATLGILLKNSFTKLSIEPAFTPGPDIELQKDSDCCSCQEKWVGYRCNCYFISSEQKTWNESRHLCASQKSSLLQLQNTDELDFMSSSQQFYWIGLSYSEEHTAWLWENGSALSQYLFPLFETFNPKNCIAYNPNGNALDESCEDKNRYICKQQLI</sequence>